<organism>
    <name type="scientific">Bos taurus</name>
    <name type="common">Bovine</name>
    <dbReference type="NCBI Taxonomy" id="9913"/>
    <lineage>
        <taxon>Eukaryota</taxon>
        <taxon>Metazoa</taxon>
        <taxon>Chordata</taxon>
        <taxon>Craniata</taxon>
        <taxon>Vertebrata</taxon>
        <taxon>Euteleostomi</taxon>
        <taxon>Mammalia</taxon>
        <taxon>Eutheria</taxon>
        <taxon>Laurasiatheria</taxon>
        <taxon>Artiodactyla</taxon>
        <taxon>Ruminantia</taxon>
        <taxon>Pecora</taxon>
        <taxon>Bovidae</taxon>
        <taxon>Bovinae</taxon>
        <taxon>Bos</taxon>
    </lineage>
</organism>
<evidence type="ECO:0000255" key="1">
    <source>
        <dbReference type="PROSITE-ProRule" id="PRU00116"/>
    </source>
</evidence>
<evidence type="ECO:0000256" key="2">
    <source>
        <dbReference type="SAM" id="MobiDB-lite"/>
    </source>
</evidence>
<evidence type="ECO:0000303" key="3">
    <source>
    </source>
</evidence>
<evidence type="ECO:0000305" key="4"/>
<sequence>MERERLVLKVTALQACIRGFLVRRQFQSLRGEYEAIVQEIEGDLGTLQWTEGWIPRPRFLPKKAKSCQTWKATGERAPNPEQELWSRFACKETEKETIREDMILKKSGESFTNASSLPCRDASAWSQDEQSRRTGKPSQETRDVSRKNDPEAAGPGLFHSQTELQELQNHRSHLAMELLWLQQAINSRKEYLVLKQTLRSPEVNQNRHEPSLCQEHGGQSCEKAGSQPGPPLEDQPYRGRTPGEPGHVDASCWRLRSQAHKFPEGLATPDKITAGAKYRDPSYRWPGPQLPTLSEYQATGKRLTKELDCGEEISGETCLQLTTLLEDESHKELKSKGSCPGKARTQLPTLHKDPNIEDNSPRGPCPKELDWQRAVPQELGVSEDHVTWDGSLAEHGGLDLWKNKPPKGQTPSDKSSIERSPSESSHEGWQNQRAVPFRSRPPEKLSTGSGHTGEDHWRGRQWKTGPAG</sequence>
<protein>
    <recommendedName>
        <fullName>IQ domain-containing protein C</fullName>
    </recommendedName>
</protein>
<accession>Q2TBI7</accession>
<accession>Q58DC6</accession>
<name>IQCC_BOVIN</name>
<dbReference type="EMBL" id="BT021671">
    <property type="protein sequence ID" value="AAX46518.1"/>
    <property type="molecule type" value="mRNA"/>
</dbReference>
<dbReference type="EMBL" id="BC110130">
    <property type="protein sequence ID" value="AAI10131.1"/>
    <property type="molecule type" value="mRNA"/>
</dbReference>
<dbReference type="RefSeq" id="NP_001019663.1">
    <property type="nucleotide sequence ID" value="NM_001024492.1"/>
</dbReference>
<dbReference type="FunCoup" id="Q2TBI7">
    <property type="interactions" value="911"/>
</dbReference>
<dbReference type="STRING" id="9913.ENSBTAP00000040857"/>
<dbReference type="PaxDb" id="9913-ENSBTAP00000040857"/>
<dbReference type="GeneID" id="507606"/>
<dbReference type="KEGG" id="bta:507606"/>
<dbReference type="CTD" id="55721"/>
<dbReference type="eggNOG" id="ENOG502S8YC">
    <property type="taxonomic scope" value="Eukaryota"/>
</dbReference>
<dbReference type="InParanoid" id="Q2TBI7"/>
<dbReference type="OrthoDB" id="6161953at2759"/>
<dbReference type="Proteomes" id="UP000009136">
    <property type="component" value="Unplaced"/>
</dbReference>
<dbReference type="InterPro" id="IPR042506">
    <property type="entry name" value="IQCC"/>
</dbReference>
<dbReference type="PANTHER" id="PTHR16049">
    <property type="entry name" value="IQ DOMAIN-CONTAINING PROTEIN C"/>
    <property type="match status" value="1"/>
</dbReference>
<dbReference type="PANTHER" id="PTHR16049:SF8">
    <property type="entry name" value="IQ DOMAIN-CONTAINING PROTEIN C"/>
    <property type="match status" value="1"/>
</dbReference>
<dbReference type="PROSITE" id="PS50096">
    <property type="entry name" value="IQ"/>
    <property type="match status" value="1"/>
</dbReference>
<feature type="chain" id="PRO_0000282544" description="IQ domain-containing protein C">
    <location>
        <begin position="1"/>
        <end position="468"/>
    </location>
</feature>
<feature type="domain" description="IQ" evidence="1">
    <location>
        <begin position="6"/>
        <end position="35"/>
    </location>
</feature>
<feature type="region of interest" description="Disordered" evidence="2">
    <location>
        <begin position="113"/>
        <end position="157"/>
    </location>
</feature>
<feature type="region of interest" description="Disordered" evidence="2">
    <location>
        <begin position="202"/>
        <end position="245"/>
    </location>
</feature>
<feature type="region of interest" description="Disordered" evidence="2">
    <location>
        <begin position="329"/>
        <end position="468"/>
    </location>
</feature>
<feature type="compositionally biased region" description="Basic and acidic residues" evidence="2">
    <location>
        <begin position="139"/>
        <end position="150"/>
    </location>
</feature>
<feature type="compositionally biased region" description="Basic and acidic residues" evidence="2">
    <location>
        <begin position="415"/>
        <end position="426"/>
    </location>
</feature>
<feature type="splice variant" id="VSP_024175" description="In isoform 2." evidence="3">
    <original>MERERLVLKVTALQACIRGFLVRRQFQSLRGEYEAIVQEIEGDLGTLQWTEGWIPRPRFLPK</original>
    <variation>MLNQNVQILGGFSLGALTPLISQ</variation>
    <location>
        <begin position="1"/>
        <end position="62"/>
    </location>
</feature>
<feature type="sequence conflict" description="In Ref. 1; AAX46518." evidence="4" ref="1">
    <original>K</original>
    <variation>M</variation>
    <location>
        <position position="147"/>
    </location>
</feature>
<feature type="sequence conflict" description="In Ref. 1; AAX46518." evidence="4" ref="1">
    <original>E</original>
    <variation>D</variation>
    <location>
        <position position="215"/>
    </location>
</feature>
<feature type="sequence conflict" description="In Ref. 1; AAX46518." evidence="4" ref="1">
    <original>I</original>
    <variation>T</variation>
    <location>
        <position position="272"/>
    </location>
</feature>
<feature type="sequence conflict" description="In Ref. 1; AAX46518." evidence="4" ref="1">
    <original>D</original>
    <variation>A</variation>
    <location>
        <position position="399"/>
    </location>
</feature>
<keyword id="KW-0025">Alternative splicing</keyword>
<keyword id="KW-1185">Reference proteome</keyword>
<proteinExistence type="evidence at transcript level"/>
<gene>
    <name type="primary">IQCC</name>
</gene>
<comment type="alternative products">
    <event type="alternative splicing"/>
    <isoform>
        <id>Q2TBI7-1</id>
        <name>1</name>
        <sequence type="displayed"/>
    </isoform>
    <isoform>
        <id>Q2TBI7-2</id>
        <name>2</name>
        <sequence type="described" ref="VSP_024175"/>
    </isoform>
</comment>
<reference key="1">
    <citation type="journal article" date="2005" name="BMC Genomics">
        <title>Characterization of 954 bovine full-CDS cDNA sequences.</title>
        <authorList>
            <person name="Harhay G.P."/>
            <person name="Sonstegard T.S."/>
            <person name="Keele J.W."/>
            <person name="Heaton M.P."/>
            <person name="Clawson M.L."/>
            <person name="Snelling W.M."/>
            <person name="Wiedmann R.T."/>
            <person name="Van Tassell C.P."/>
            <person name="Smith T.P.L."/>
        </authorList>
    </citation>
    <scope>NUCLEOTIDE SEQUENCE [LARGE SCALE MRNA] (ISOFORM 2)</scope>
</reference>
<reference key="2">
    <citation type="submission" date="2005-11" db="EMBL/GenBank/DDBJ databases">
        <authorList>
            <consortium name="NIH - Mammalian Gene Collection (MGC) project"/>
        </authorList>
    </citation>
    <scope>NUCLEOTIDE SEQUENCE [LARGE SCALE MRNA] (ISOFORM 1)</scope>
    <source>
        <strain>Crossbred X Angus</strain>
        <tissue>Liver</tissue>
    </source>
</reference>